<name>Y2968_GEOUR</name>
<protein>
    <recommendedName>
        <fullName evidence="1">Nucleotide-binding protein Gura_2968</fullName>
    </recommendedName>
</protein>
<accession>A5G5S2</accession>
<keyword id="KW-0067">ATP-binding</keyword>
<keyword id="KW-0342">GTP-binding</keyword>
<keyword id="KW-0547">Nucleotide-binding</keyword>
<keyword id="KW-1185">Reference proteome</keyword>
<reference key="1">
    <citation type="submission" date="2007-05" db="EMBL/GenBank/DDBJ databases">
        <title>Complete sequence of Geobacter uraniireducens Rf4.</title>
        <authorList>
            <consortium name="US DOE Joint Genome Institute"/>
            <person name="Copeland A."/>
            <person name="Lucas S."/>
            <person name="Lapidus A."/>
            <person name="Barry K."/>
            <person name="Detter J.C."/>
            <person name="Glavina del Rio T."/>
            <person name="Hammon N."/>
            <person name="Israni S."/>
            <person name="Dalin E."/>
            <person name="Tice H."/>
            <person name="Pitluck S."/>
            <person name="Chertkov O."/>
            <person name="Brettin T."/>
            <person name="Bruce D."/>
            <person name="Han C."/>
            <person name="Schmutz J."/>
            <person name="Larimer F."/>
            <person name="Land M."/>
            <person name="Hauser L."/>
            <person name="Kyrpides N."/>
            <person name="Mikhailova N."/>
            <person name="Shelobolina E."/>
            <person name="Aklujkar M."/>
            <person name="Lovley D."/>
            <person name="Richardson P."/>
        </authorList>
    </citation>
    <scope>NUCLEOTIDE SEQUENCE [LARGE SCALE GENOMIC DNA]</scope>
    <source>
        <strain>ATCC BAA-1134 / JCM 13001 / Rf4</strain>
    </source>
</reference>
<feature type="chain" id="PRO_1000082659" description="Nucleotide-binding protein Gura_2968">
    <location>
        <begin position="1"/>
        <end position="288"/>
    </location>
</feature>
<feature type="binding site" evidence="1">
    <location>
        <begin position="8"/>
        <end position="15"/>
    </location>
    <ligand>
        <name>ATP</name>
        <dbReference type="ChEBI" id="CHEBI:30616"/>
    </ligand>
</feature>
<feature type="binding site" evidence="1">
    <location>
        <begin position="59"/>
        <end position="62"/>
    </location>
    <ligand>
        <name>GTP</name>
        <dbReference type="ChEBI" id="CHEBI:37565"/>
    </ligand>
</feature>
<gene>
    <name type="ordered locus">Gura_2968</name>
</gene>
<dbReference type="EMBL" id="CP000698">
    <property type="protein sequence ID" value="ABQ27140.1"/>
    <property type="molecule type" value="Genomic_DNA"/>
</dbReference>
<dbReference type="RefSeq" id="WP_011939809.1">
    <property type="nucleotide sequence ID" value="NC_009483.1"/>
</dbReference>
<dbReference type="SMR" id="A5G5S2"/>
<dbReference type="STRING" id="351605.Gura_2968"/>
<dbReference type="KEGG" id="gur:Gura_2968"/>
<dbReference type="HOGENOM" id="CLU_059558_0_0_7"/>
<dbReference type="OrthoDB" id="9784461at2"/>
<dbReference type="Proteomes" id="UP000006695">
    <property type="component" value="Chromosome"/>
</dbReference>
<dbReference type="GO" id="GO:0005524">
    <property type="term" value="F:ATP binding"/>
    <property type="evidence" value="ECO:0007669"/>
    <property type="project" value="UniProtKB-UniRule"/>
</dbReference>
<dbReference type="GO" id="GO:0005525">
    <property type="term" value="F:GTP binding"/>
    <property type="evidence" value="ECO:0007669"/>
    <property type="project" value="UniProtKB-UniRule"/>
</dbReference>
<dbReference type="Gene3D" id="3.40.50.300">
    <property type="entry name" value="P-loop containing nucleotide triphosphate hydrolases"/>
    <property type="match status" value="1"/>
</dbReference>
<dbReference type="HAMAP" id="MF_00636">
    <property type="entry name" value="RapZ_like"/>
    <property type="match status" value="1"/>
</dbReference>
<dbReference type="InterPro" id="IPR027417">
    <property type="entry name" value="P-loop_NTPase"/>
</dbReference>
<dbReference type="InterPro" id="IPR005337">
    <property type="entry name" value="RapZ-like"/>
</dbReference>
<dbReference type="InterPro" id="IPR053930">
    <property type="entry name" value="RapZ-like_N"/>
</dbReference>
<dbReference type="InterPro" id="IPR053931">
    <property type="entry name" value="RapZ_C"/>
</dbReference>
<dbReference type="NCBIfam" id="NF003828">
    <property type="entry name" value="PRK05416.1"/>
    <property type="match status" value="1"/>
</dbReference>
<dbReference type="PANTHER" id="PTHR30448">
    <property type="entry name" value="RNASE ADAPTER PROTEIN RAPZ"/>
    <property type="match status" value="1"/>
</dbReference>
<dbReference type="PANTHER" id="PTHR30448:SF0">
    <property type="entry name" value="RNASE ADAPTER PROTEIN RAPZ"/>
    <property type="match status" value="1"/>
</dbReference>
<dbReference type="Pfam" id="PF22740">
    <property type="entry name" value="PapZ_C"/>
    <property type="match status" value="1"/>
</dbReference>
<dbReference type="Pfam" id="PF03668">
    <property type="entry name" value="RapZ-like_N"/>
    <property type="match status" value="1"/>
</dbReference>
<dbReference type="PIRSF" id="PIRSF005052">
    <property type="entry name" value="P-loopkin"/>
    <property type="match status" value="1"/>
</dbReference>
<dbReference type="SUPFAM" id="SSF52540">
    <property type="entry name" value="P-loop containing nucleoside triphosphate hydrolases"/>
    <property type="match status" value="1"/>
</dbReference>
<evidence type="ECO:0000255" key="1">
    <source>
        <dbReference type="HAMAP-Rule" id="MF_00636"/>
    </source>
</evidence>
<organism>
    <name type="scientific">Geotalea uraniireducens (strain Rf4)</name>
    <name type="common">Geobacter uraniireducens</name>
    <dbReference type="NCBI Taxonomy" id="351605"/>
    <lineage>
        <taxon>Bacteria</taxon>
        <taxon>Pseudomonadati</taxon>
        <taxon>Thermodesulfobacteriota</taxon>
        <taxon>Desulfuromonadia</taxon>
        <taxon>Geobacterales</taxon>
        <taxon>Geobacteraceae</taxon>
        <taxon>Geotalea</taxon>
    </lineage>
</organism>
<sequence length="288" mass="33355">MRILIITGLSGSGKSTAVRALEDEGFFCQDNLPVMLFPTFVELVDKAKERVRDVALVMDIRGRDFHAGYEKVFQEISEAGHFVEILFFDATDEVLIRRFSETRRRHPAMESGSVPEGIRYEREQLAGLRRLATMIIDTSELNVHQLRELVISHVKGNHGGREMTIHLQSFGYRYGIPLESDLVMDVRFLPNPYFVPELKEFSGLNPNVRDYVLKYEETRIFLNKFKEMLEFLLPGYRREGKSYLTVSIGCTGGRHRSVVITEEMRDFFRTKQLNLNVSHRDMKKGLEK</sequence>
<proteinExistence type="inferred from homology"/>
<comment type="function">
    <text evidence="1">Displays ATPase and GTPase activities.</text>
</comment>
<comment type="similarity">
    <text evidence="1">Belongs to the RapZ-like family.</text>
</comment>